<sequence>MLDVKSQDISIPEAVVVLCTAPDEATAQDLAAKVLAEKLAACATLLPGATSLYYWEGKLEQEYEVQMILKTTVSHQQALIDCLKSHHPYQTPELLVLPVTHGDTDYLSWLNASLR</sequence>
<evidence type="ECO:0000255" key="1">
    <source>
        <dbReference type="HAMAP-Rule" id="MF_01160"/>
    </source>
</evidence>
<accession>B5BKE7</accession>
<name>CUTA_SALPK</name>
<dbReference type="EMBL" id="FM200053">
    <property type="protein sequence ID" value="CAR62130.1"/>
    <property type="molecule type" value="Genomic_DNA"/>
</dbReference>
<dbReference type="RefSeq" id="WP_000887832.1">
    <property type="nucleotide sequence ID" value="NC_011147.1"/>
</dbReference>
<dbReference type="SMR" id="B5BKE7"/>
<dbReference type="GeneID" id="66758552"/>
<dbReference type="KEGG" id="sek:SSPA3844"/>
<dbReference type="HOGENOM" id="CLU_098807_3_0_6"/>
<dbReference type="Proteomes" id="UP000001869">
    <property type="component" value="Chromosome"/>
</dbReference>
<dbReference type="GO" id="GO:0005737">
    <property type="term" value="C:cytoplasm"/>
    <property type="evidence" value="ECO:0007669"/>
    <property type="project" value="UniProtKB-SubCell"/>
</dbReference>
<dbReference type="GO" id="GO:0005507">
    <property type="term" value="F:copper ion binding"/>
    <property type="evidence" value="ECO:0007669"/>
    <property type="project" value="UniProtKB-UniRule"/>
</dbReference>
<dbReference type="GO" id="GO:0010038">
    <property type="term" value="P:response to metal ion"/>
    <property type="evidence" value="ECO:0007669"/>
    <property type="project" value="InterPro"/>
</dbReference>
<dbReference type="FunFam" id="3.30.70.120:FF:000004">
    <property type="entry name" value="Divalent-cation tolerance protein CutA"/>
    <property type="match status" value="1"/>
</dbReference>
<dbReference type="Gene3D" id="3.30.70.120">
    <property type="match status" value="1"/>
</dbReference>
<dbReference type="HAMAP" id="MF_01160">
    <property type="entry name" value="CutA"/>
    <property type="match status" value="1"/>
</dbReference>
<dbReference type="InterPro" id="IPR023700">
    <property type="entry name" value="CutA_Enterobact"/>
</dbReference>
<dbReference type="InterPro" id="IPR004323">
    <property type="entry name" value="Ion_tolerance_CutA"/>
</dbReference>
<dbReference type="InterPro" id="IPR011322">
    <property type="entry name" value="N-reg_PII-like_a/b"/>
</dbReference>
<dbReference type="InterPro" id="IPR015867">
    <property type="entry name" value="N-reg_PII/ATP_PRibTrfase_C"/>
</dbReference>
<dbReference type="NCBIfam" id="NF007930">
    <property type="entry name" value="PRK10645.1"/>
    <property type="match status" value="1"/>
</dbReference>
<dbReference type="PANTHER" id="PTHR23419">
    <property type="entry name" value="DIVALENT CATION TOLERANCE CUTA-RELATED"/>
    <property type="match status" value="1"/>
</dbReference>
<dbReference type="PANTHER" id="PTHR23419:SF8">
    <property type="entry name" value="FI09726P"/>
    <property type="match status" value="1"/>
</dbReference>
<dbReference type="Pfam" id="PF03091">
    <property type="entry name" value="CutA1"/>
    <property type="match status" value="1"/>
</dbReference>
<dbReference type="SUPFAM" id="SSF54913">
    <property type="entry name" value="GlnB-like"/>
    <property type="match status" value="1"/>
</dbReference>
<reference key="1">
    <citation type="journal article" date="2009" name="BMC Genomics">
        <title>Pseudogene accumulation in the evolutionary histories of Salmonella enterica serovars Paratyphi A and Typhi.</title>
        <authorList>
            <person name="Holt K.E."/>
            <person name="Thomson N.R."/>
            <person name="Wain J."/>
            <person name="Langridge G.C."/>
            <person name="Hasan R."/>
            <person name="Bhutta Z.A."/>
            <person name="Quail M.A."/>
            <person name="Norbertczak H."/>
            <person name="Walker D."/>
            <person name="Simmonds M."/>
            <person name="White B."/>
            <person name="Bason N."/>
            <person name="Mungall K."/>
            <person name="Dougan G."/>
            <person name="Parkhill J."/>
        </authorList>
    </citation>
    <scope>NUCLEOTIDE SEQUENCE [LARGE SCALE GENOMIC DNA]</scope>
    <source>
        <strain>AKU_12601</strain>
    </source>
</reference>
<proteinExistence type="inferred from homology"/>
<organism>
    <name type="scientific">Salmonella paratyphi A (strain AKU_12601)</name>
    <dbReference type="NCBI Taxonomy" id="554290"/>
    <lineage>
        <taxon>Bacteria</taxon>
        <taxon>Pseudomonadati</taxon>
        <taxon>Pseudomonadota</taxon>
        <taxon>Gammaproteobacteria</taxon>
        <taxon>Enterobacterales</taxon>
        <taxon>Enterobacteriaceae</taxon>
        <taxon>Salmonella</taxon>
    </lineage>
</organism>
<feature type="chain" id="PRO_1000137853" description="Divalent-cation tolerance protein CutA">
    <location>
        <begin position="1"/>
        <end position="115"/>
    </location>
</feature>
<feature type="binding site" evidence="1">
    <location>
        <position position="19"/>
    </location>
    <ligand>
        <name>Cu cation</name>
        <dbReference type="ChEBI" id="CHEBI:23378"/>
    </ligand>
</feature>
<feature type="binding site" evidence="1">
    <location>
        <position position="86"/>
    </location>
    <ligand>
        <name>Cu cation</name>
        <dbReference type="ChEBI" id="CHEBI:23378"/>
    </ligand>
</feature>
<feature type="binding site" evidence="1">
    <location>
        <position position="87"/>
    </location>
    <ligand>
        <name>Cu cation</name>
        <dbReference type="ChEBI" id="CHEBI:23378"/>
    </ligand>
</feature>
<gene>
    <name evidence="1" type="primary">cutA</name>
    <name type="ordered locus">SSPA3844</name>
</gene>
<keyword id="KW-0186">Copper</keyword>
<keyword id="KW-0963">Cytoplasm</keyword>
<keyword id="KW-0479">Metal-binding</keyword>
<comment type="function">
    <text evidence="1">Involved in resistance toward heavy metals.</text>
</comment>
<comment type="cofactor">
    <cofactor evidence="1">
        <name>Cu cation</name>
        <dbReference type="ChEBI" id="CHEBI:23378"/>
    </cofactor>
    <text evidence="1">Binds 1 copper ion per subunit.</text>
</comment>
<comment type="subunit">
    <text evidence="1">Homotrimer.</text>
</comment>
<comment type="subcellular location">
    <subcellularLocation>
        <location evidence="1">Cytoplasm</location>
    </subcellularLocation>
</comment>
<comment type="similarity">
    <text evidence="1">Belongs to the CutA family.</text>
</comment>
<protein>
    <recommendedName>
        <fullName evidence="1">Divalent-cation tolerance protein CutA</fullName>
    </recommendedName>
</protein>